<organism>
    <name type="scientific">Staphylococcus aureus</name>
    <dbReference type="NCBI Taxonomy" id="1280"/>
    <lineage>
        <taxon>Bacteria</taxon>
        <taxon>Bacillati</taxon>
        <taxon>Bacillota</taxon>
        <taxon>Bacilli</taxon>
        <taxon>Bacillales</taxon>
        <taxon>Staphylococcaceae</taxon>
        <taxon>Staphylococcus</taxon>
    </lineage>
</organism>
<reference key="1">
    <citation type="journal article" date="1994" name="J. Bacteriol.">
        <title>Sequence analysis and molecular characterization of genes required for the biosynthesis of type 1 capsular polysaccharide in Staphylococcus aureus.</title>
        <authorList>
            <person name="Lin W.S."/>
            <person name="Cunneen T."/>
            <person name="Lee C.Y."/>
        </authorList>
    </citation>
    <scope>NUCLEOTIDE SEQUENCE [GENOMIC DNA]</scope>
    <source>
        <strain>ATCC 49951 / M / NCTC 10649</strain>
    </source>
</reference>
<name>CAPC_STAAU</name>
<sequence length="255" mass="29377">MVDIHNHILVDVDDGPKSINEAIELLKQAQSENVTDIVATPHHLHKRYSNDIEKVKIKLNELKNNSEIKKLGLNLYVGQEIRITDQIIEGIKNKEIEGINESRYLLIEFPSNEIPYYTNQLFYELQTMGYIPIIAHPERNKAIVQNLDLLFELINGGALSQITASSLLGDFGNNIRKLSLKMIDSNLAHFIASDAHSITNRPFMLKQLFNDRKLKAYYEELESYLKNGKLVLTNERISKQIPTQDYKQKKWFGLL</sequence>
<accession>P39852</accession>
<proteinExistence type="inferred from homology"/>
<evidence type="ECO:0000305" key="1"/>
<gene>
    <name type="primary">capC</name>
</gene>
<dbReference type="EC" id="3.1.3.48"/>
<dbReference type="EMBL" id="U10927">
    <property type="protein sequence ID" value="AAA64642.1"/>
    <property type="molecule type" value="Genomic_DNA"/>
</dbReference>
<dbReference type="RefSeq" id="WP_115294897.1">
    <property type="nucleotide sequence ID" value="NZ_UGZL01000001.1"/>
</dbReference>
<dbReference type="SMR" id="P39852"/>
<dbReference type="UniPathway" id="UPA00934"/>
<dbReference type="GO" id="GO:0030145">
    <property type="term" value="F:manganese ion binding"/>
    <property type="evidence" value="ECO:0007669"/>
    <property type="project" value="InterPro"/>
</dbReference>
<dbReference type="GO" id="GO:0004725">
    <property type="term" value="F:protein tyrosine phosphatase activity"/>
    <property type="evidence" value="ECO:0007669"/>
    <property type="project" value="UniProtKB-EC"/>
</dbReference>
<dbReference type="GO" id="GO:0045227">
    <property type="term" value="P:capsule polysaccharide biosynthetic process"/>
    <property type="evidence" value="ECO:0007669"/>
    <property type="project" value="UniProtKB-UniPathway"/>
</dbReference>
<dbReference type="Gene3D" id="3.20.20.140">
    <property type="entry name" value="Metal-dependent hydrolases"/>
    <property type="match status" value="1"/>
</dbReference>
<dbReference type="InterPro" id="IPR016667">
    <property type="entry name" value="Caps_polysacc_synth_CpsB/CapC"/>
</dbReference>
<dbReference type="InterPro" id="IPR016195">
    <property type="entry name" value="Pol/histidinol_Pase-like"/>
</dbReference>
<dbReference type="PANTHER" id="PTHR39181">
    <property type="entry name" value="TYROSINE-PROTEIN PHOSPHATASE YWQE"/>
    <property type="match status" value="1"/>
</dbReference>
<dbReference type="PANTHER" id="PTHR39181:SF1">
    <property type="entry name" value="TYROSINE-PROTEIN PHOSPHATASE YWQE"/>
    <property type="match status" value="1"/>
</dbReference>
<dbReference type="Pfam" id="PF19567">
    <property type="entry name" value="CpsB_CapC"/>
    <property type="match status" value="1"/>
</dbReference>
<dbReference type="PIRSF" id="PIRSF016557">
    <property type="entry name" value="Caps_synth_CpsB"/>
    <property type="match status" value="1"/>
</dbReference>
<dbReference type="SUPFAM" id="SSF89550">
    <property type="entry name" value="PHP domain-like"/>
    <property type="match status" value="1"/>
</dbReference>
<comment type="function">
    <text>Required for the biosynthesis of type 1 capsular polysaccharide.</text>
</comment>
<comment type="catalytic activity">
    <reaction>
        <text>O-phospho-L-tyrosyl-[protein] + H2O = L-tyrosyl-[protein] + phosphate</text>
        <dbReference type="Rhea" id="RHEA:10684"/>
        <dbReference type="Rhea" id="RHEA-COMP:10136"/>
        <dbReference type="Rhea" id="RHEA-COMP:20101"/>
        <dbReference type="ChEBI" id="CHEBI:15377"/>
        <dbReference type="ChEBI" id="CHEBI:43474"/>
        <dbReference type="ChEBI" id="CHEBI:46858"/>
        <dbReference type="ChEBI" id="CHEBI:61978"/>
        <dbReference type="EC" id="3.1.3.48"/>
    </reaction>
</comment>
<comment type="pathway">
    <text>Capsule biogenesis; capsule polysaccharide biosynthesis.</text>
</comment>
<comment type="similarity">
    <text evidence="1">Belongs to the metallo-dependent hydrolases superfamily. CpsB/CapC family.</text>
</comment>
<protein>
    <recommendedName>
        <fullName>Putative tyrosine-protein phosphatase CapC</fullName>
        <ecNumber>3.1.3.48</ecNumber>
    </recommendedName>
</protein>
<keyword id="KW-0972">Capsule biogenesis/degradation</keyword>
<keyword id="KW-0270">Exopolysaccharide synthesis</keyword>
<keyword id="KW-0378">Hydrolase</keyword>
<keyword id="KW-0904">Protein phosphatase</keyword>
<feature type="chain" id="PRO_0000057886" description="Putative tyrosine-protein phosphatase CapC">
    <location>
        <begin position="1"/>
        <end position="255"/>
    </location>
</feature>